<feature type="chain" id="PRO_5000238813" description="NADH-quinone oxidoreductase subunit N">
    <location>
        <begin position="1"/>
        <end position="447"/>
    </location>
</feature>
<feature type="transmembrane region" description="Helical" evidence="1">
    <location>
        <begin position="4"/>
        <end position="24"/>
    </location>
</feature>
<feature type="transmembrane region" description="Helical" evidence="1">
    <location>
        <begin position="27"/>
        <end position="47"/>
    </location>
</feature>
<feature type="transmembrane region" description="Helical" evidence="1">
    <location>
        <begin position="68"/>
        <end position="88"/>
    </location>
</feature>
<feature type="transmembrane region" description="Helical" evidence="1">
    <location>
        <begin position="92"/>
        <end position="112"/>
    </location>
</feature>
<feature type="transmembrane region" description="Helical" evidence="1">
    <location>
        <begin position="113"/>
        <end position="133"/>
    </location>
</feature>
<feature type="transmembrane region" description="Helical" evidence="1">
    <location>
        <begin position="146"/>
        <end position="166"/>
    </location>
</feature>
<feature type="transmembrane region" description="Helical" evidence="1">
    <location>
        <begin position="181"/>
        <end position="201"/>
    </location>
</feature>
<feature type="transmembrane region" description="Helical" evidence="1">
    <location>
        <begin position="215"/>
        <end position="235"/>
    </location>
</feature>
<feature type="transmembrane region" description="Helical" evidence="1">
    <location>
        <begin position="245"/>
        <end position="265"/>
    </location>
</feature>
<feature type="transmembrane region" description="Helical" evidence="1">
    <location>
        <begin position="280"/>
        <end position="300"/>
    </location>
</feature>
<feature type="transmembrane region" description="Helical" evidence="1">
    <location>
        <begin position="302"/>
        <end position="322"/>
    </location>
</feature>
<feature type="transmembrane region" description="Helical" evidence="1">
    <location>
        <begin position="342"/>
        <end position="362"/>
    </location>
</feature>
<feature type="transmembrane region" description="Helical" evidence="1">
    <location>
        <begin position="376"/>
        <end position="395"/>
    </location>
</feature>
<comment type="function">
    <text evidence="1">NDH-1 shuttles electrons from NADH, via FMN and iron-sulfur (Fe-S) centers, to quinones in the respiratory chain. The immediate electron acceptor for the enzyme in this species is believed to be ubiquinone. Couples the redox reaction to proton translocation (for every two electrons transferred, four hydrogen ions are translocated across the cytoplasmic membrane), and thus conserves the redox energy in a proton gradient.</text>
</comment>
<comment type="catalytic activity">
    <reaction evidence="1">
        <text>a quinone + NADH + 5 H(+)(in) = a quinol + NAD(+) + 4 H(+)(out)</text>
        <dbReference type="Rhea" id="RHEA:57888"/>
        <dbReference type="ChEBI" id="CHEBI:15378"/>
        <dbReference type="ChEBI" id="CHEBI:24646"/>
        <dbReference type="ChEBI" id="CHEBI:57540"/>
        <dbReference type="ChEBI" id="CHEBI:57945"/>
        <dbReference type="ChEBI" id="CHEBI:132124"/>
    </reaction>
</comment>
<comment type="subunit">
    <text evidence="1">NDH-1 is composed of 14 different subunits. Subunits NuoA, H, J, K, L, M, N constitute the membrane sector of the complex.</text>
</comment>
<comment type="subcellular location">
    <subcellularLocation>
        <location evidence="1">Cell inner membrane</location>
        <topology evidence="1">Multi-pass membrane protein</topology>
    </subcellularLocation>
</comment>
<comment type="similarity">
    <text evidence="1">Belongs to the complex I subunit 2 family.</text>
</comment>
<keyword id="KW-0997">Cell inner membrane</keyword>
<keyword id="KW-1003">Cell membrane</keyword>
<keyword id="KW-0472">Membrane</keyword>
<keyword id="KW-0520">NAD</keyword>
<keyword id="KW-0874">Quinone</keyword>
<keyword id="KW-1278">Translocase</keyword>
<keyword id="KW-0812">Transmembrane</keyword>
<keyword id="KW-1133">Transmembrane helix</keyword>
<keyword id="KW-0813">Transport</keyword>
<keyword id="KW-0830">Ubiquinone</keyword>
<reference key="1">
    <citation type="submission" date="2007-04" db="EMBL/GenBank/DDBJ databases">
        <title>Complete sequence of chromosome of Rhodobacter sphaeroides ATCC 17025.</title>
        <authorList>
            <consortium name="US DOE Joint Genome Institute"/>
            <person name="Copeland A."/>
            <person name="Lucas S."/>
            <person name="Lapidus A."/>
            <person name="Barry K."/>
            <person name="Detter J.C."/>
            <person name="Glavina del Rio T."/>
            <person name="Hammon N."/>
            <person name="Israni S."/>
            <person name="Dalin E."/>
            <person name="Tice H."/>
            <person name="Pitluck S."/>
            <person name="Chertkov O."/>
            <person name="Brettin T."/>
            <person name="Bruce D."/>
            <person name="Han C."/>
            <person name="Schmutz J."/>
            <person name="Larimer F."/>
            <person name="Land M."/>
            <person name="Hauser L."/>
            <person name="Kyrpides N."/>
            <person name="Kim E."/>
            <person name="Richardson P."/>
            <person name="Mackenzie C."/>
            <person name="Choudhary M."/>
            <person name="Donohue T.J."/>
            <person name="Kaplan S."/>
        </authorList>
    </citation>
    <scope>NUCLEOTIDE SEQUENCE [LARGE SCALE GENOMIC DNA]</scope>
    <source>
        <strain>ATCC 17025 / ATH 2.4.3</strain>
    </source>
</reference>
<proteinExistence type="inferred from homology"/>
<gene>
    <name evidence="1" type="primary">nuoN</name>
    <name type="ordered locus">Rsph17025_1701</name>
</gene>
<dbReference type="EC" id="7.1.1.-" evidence="1"/>
<dbReference type="EMBL" id="CP000661">
    <property type="protein sequence ID" value="ABP70594.1"/>
    <property type="molecule type" value="Genomic_DNA"/>
</dbReference>
<dbReference type="SMR" id="A4WT80"/>
<dbReference type="STRING" id="349102.Rsph17025_1701"/>
<dbReference type="KEGG" id="rsq:Rsph17025_1701"/>
<dbReference type="eggNOG" id="COG1007">
    <property type="taxonomic scope" value="Bacteria"/>
</dbReference>
<dbReference type="HOGENOM" id="CLU_007100_1_5_5"/>
<dbReference type="BioCyc" id="RSPH349102:G1G8M-1749-MONOMER"/>
<dbReference type="GO" id="GO:0005886">
    <property type="term" value="C:plasma membrane"/>
    <property type="evidence" value="ECO:0007669"/>
    <property type="project" value="UniProtKB-SubCell"/>
</dbReference>
<dbReference type="GO" id="GO:0008137">
    <property type="term" value="F:NADH dehydrogenase (ubiquinone) activity"/>
    <property type="evidence" value="ECO:0007669"/>
    <property type="project" value="InterPro"/>
</dbReference>
<dbReference type="GO" id="GO:0050136">
    <property type="term" value="F:NADH:ubiquinone reductase (non-electrogenic) activity"/>
    <property type="evidence" value="ECO:0007669"/>
    <property type="project" value="UniProtKB-UniRule"/>
</dbReference>
<dbReference type="GO" id="GO:0048038">
    <property type="term" value="F:quinone binding"/>
    <property type="evidence" value="ECO:0007669"/>
    <property type="project" value="UniProtKB-KW"/>
</dbReference>
<dbReference type="GO" id="GO:0042773">
    <property type="term" value="P:ATP synthesis coupled electron transport"/>
    <property type="evidence" value="ECO:0007669"/>
    <property type="project" value="InterPro"/>
</dbReference>
<dbReference type="HAMAP" id="MF_00445">
    <property type="entry name" value="NDH1_NuoN_1"/>
    <property type="match status" value="1"/>
</dbReference>
<dbReference type="InterPro" id="IPR010096">
    <property type="entry name" value="NADH-Q_OxRdtase_suN/2"/>
</dbReference>
<dbReference type="InterPro" id="IPR001750">
    <property type="entry name" value="ND/Mrp_TM"/>
</dbReference>
<dbReference type="PANTHER" id="PTHR22773">
    <property type="entry name" value="NADH DEHYDROGENASE"/>
    <property type="match status" value="1"/>
</dbReference>
<dbReference type="Pfam" id="PF00361">
    <property type="entry name" value="Proton_antipo_M"/>
    <property type="match status" value="1"/>
</dbReference>
<dbReference type="PRINTS" id="PR01434">
    <property type="entry name" value="NADHDHGNASE5"/>
</dbReference>
<sequence>MPSFAALLPVILLGAGAVTAMLAAPRLPGLARWIAGFALVAASVALALRLGAPDGLSVLLADDRMSRLTGLVVCLSGIGSLAFLRPDGPSKEGPALLLLATLGGVVLTGAVHAASLFLGLELITLALVALFVLPLDRPALEAGYKFLILGAAAAATLLMGLALGHAATGSLALEAFGGREALLTFAAALLLAGLAFKLALVPFHMWTPDAFTGAPGAAAAFAGAASKVAVVTALVRLDAVGLPQVWALGLGTFAGVSILLGNLAALRQDGVARMLGYSSVGHAGYIAAALATGAASAPAAALFYIVTYAPALLAALCVAALIGRATRISDLRGIVWRRPLAGAAMAAALVSLAGLPVSAGFFGKYVIFTALIEGRAWALLALAIAGSALGAYYYLRFVALIFRRAPDPADPAVRWPERTLLGAATAIILLLGIRPDLLLDQIRAALP</sequence>
<evidence type="ECO:0000255" key="1">
    <source>
        <dbReference type="HAMAP-Rule" id="MF_00445"/>
    </source>
</evidence>
<organism>
    <name type="scientific">Cereibacter sphaeroides (strain ATCC 17025 / ATH 2.4.3)</name>
    <name type="common">Rhodobacter sphaeroides</name>
    <dbReference type="NCBI Taxonomy" id="349102"/>
    <lineage>
        <taxon>Bacteria</taxon>
        <taxon>Pseudomonadati</taxon>
        <taxon>Pseudomonadota</taxon>
        <taxon>Alphaproteobacteria</taxon>
        <taxon>Rhodobacterales</taxon>
        <taxon>Paracoccaceae</taxon>
        <taxon>Cereibacter</taxon>
    </lineage>
</organism>
<name>NUON_CERS5</name>
<protein>
    <recommendedName>
        <fullName evidence="1">NADH-quinone oxidoreductase subunit N</fullName>
        <ecNumber evidence="1">7.1.1.-</ecNumber>
    </recommendedName>
    <alternativeName>
        <fullName evidence="1">NADH dehydrogenase I subunit N</fullName>
    </alternativeName>
    <alternativeName>
        <fullName evidence="1">NDH-1 subunit N</fullName>
    </alternativeName>
</protein>
<accession>A4WT80</accession>